<organism>
    <name type="scientific">Pseudescherichia vulneris</name>
    <name type="common">Escherichia vulneris</name>
    <dbReference type="NCBI Taxonomy" id="566"/>
    <lineage>
        <taxon>Bacteria</taxon>
        <taxon>Pseudomonadati</taxon>
        <taxon>Pseudomonadota</taxon>
        <taxon>Gammaproteobacteria</taxon>
        <taxon>Enterobacterales</taxon>
        <taxon>Enterobacteriaceae</taxon>
        <taxon>Pseudescherichia</taxon>
    </lineage>
</organism>
<sequence length="386" mass="43341">MRDLILVGGGLANGLIAWRLRQRYPQLNLLLIEAGEQPGGNHTWSFHEDDLTPGQHAWLAPLVAHAWPGYEVQFPDLRRRLARGYYSITSERFAEALHQALGENIWLNCSVSEVLPNSVRLANGEALLAGAVIDGRGVTASSAMQTGYQLFLGQQWRLTQPHGLTVPILMDATVAQQQGYRFVYTLPLSADTLLIEDTRYANVPQRDDNALRQTVTDYAHSKGWQLAQLEREETGCLPITLAGDIQALWADAPGVPRSGMRAGLFHPTTGYSLPLAVALADAIADSPRLGSVPLYQLTRQFAERHWRRQGFFRLLNRMLFLAGREENRWRVMQRFYGLPEPTVERFYAGRLSLFDKARILTGKPPVPLGEAWRAALNHFPDRRDKG</sequence>
<gene>
    <name evidence="3" type="primary">crtY</name>
</gene>
<feature type="chain" id="PRO_0000079374" description="Lycopene beta-cyclase">
    <location>
        <begin position="1"/>
        <end position="386"/>
    </location>
</feature>
<feature type="binding site" evidence="4">
    <location>
        <begin position="3"/>
        <end position="33"/>
    </location>
    <ligand>
        <name>NAD(+)</name>
        <dbReference type="ChEBI" id="CHEBI:57540"/>
    </ligand>
</feature>
<name>CRTY_PSEVU</name>
<reference key="1">
    <citation type="journal article" date="1994" name="Mol. Gen. Genet.">
        <title>Functional assignment of Erwinia herbicola Eho10 carotenoid genes expressed in Escherichia coli.</title>
        <authorList>
            <person name="Hundle B."/>
            <person name="Alberti M."/>
            <person name="Nievelstein V."/>
            <person name="Beyer P."/>
            <person name="Kleinig H."/>
            <person name="Armstrong G.A."/>
            <person name="Burke D.H."/>
            <person name="Hearst J.E."/>
        </authorList>
    </citation>
    <scope>NUCLEOTIDE SEQUENCE [GENOMIC DNA]</scope>
    <scope>FUNCTION</scope>
    <scope>CATALYTIC ACTIVITY</scope>
    <scope>PATHWAY</scope>
    <source>
        <strain>ATCC 39368 / Eho10</strain>
    </source>
</reference>
<reference key="2">
    <citation type="journal article" date="1993" name="FEBS Lett.">
        <title>In vitro expression and activity of lycopene cyclase and beta-carotene hydroxylase from Erwinia herbicola.</title>
        <authorList>
            <person name="Hundle B.S."/>
            <person name="O'Brien D.A."/>
            <person name="Beyer P."/>
            <person name="Kleinig H."/>
            <person name="Hearst J.E."/>
        </authorList>
    </citation>
    <scope>FUNCTION</scope>
    <scope>CATALYTIC ACTIVITY</scope>
    <scope>PATHWAY</scope>
    <source>
        <strain>ATCC 39368 / Eho10</strain>
    </source>
</reference>
<proteinExistence type="evidence at protein level"/>
<keyword id="KW-0125">Carotenoid biosynthesis</keyword>
<keyword id="KW-0274">FAD</keyword>
<keyword id="KW-0285">Flavoprotein</keyword>
<keyword id="KW-0413">Isomerase</keyword>
<keyword id="KW-0520">NAD</keyword>
<keyword id="KW-0521">NADP</keyword>
<comment type="function">
    <text evidence="2 5">Catalyzes the double cyclization reaction which converts lycopene to beta-carotene.</text>
</comment>
<comment type="catalytic activity">
    <reaction evidence="2 5">
        <text>a carotenoid psi-end group = a carotenoid beta-end derivative</text>
        <dbReference type="Rhea" id="RHEA:55620"/>
        <dbReference type="ChEBI" id="CHEBI:139114"/>
        <dbReference type="ChEBI" id="CHEBI:139120"/>
        <dbReference type="EC" id="5.5.1.19"/>
    </reaction>
    <physiologicalReaction direction="left-to-right" evidence="2 5">
        <dbReference type="Rhea" id="RHEA:55621"/>
    </physiologicalReaction>
</comment>
<comment type="catalytic activity">
    <reaction evidence="1">
        <text>all-trans-lycopene = gamma-carotene</text>
        <dbReference type="Rhea" id="RHEA:32219"/>
        <dbReference type="ChEBI" id="CHEBI:15948"/>
        <dbReference type="ChEBI" id="CHEBI:27740"/>
        <dbReference type="EC" id="5.5.1.19"/>
    </reaction>
    <physiologicalReaction direction="left-to-right" evidence="1">
        <dbReference type="Rhea" id="RHEA:32220"/>
    </physiologicalReaction>
</comment>
<comment type="catalytic activity">
    <reaction evidence="1">
        <text>gamma-carotene = all-trans-beta-carotene</text>
        <dbReference type="Rhea" id="RHEA:32239"/>
        <dbReference type="ChEBI" id="CHEBI:17579"/>
        <dbReference type="ChEBI" id="CHEBI:27740"/>
        <dbReference type="EC" id="5.5.1.19"/>
    </reaction>
    <physiologicalReaction direction="left-to-right" evidence="1">
        <dbReference type="Rhea" id="RHEA:32240"/>
    </physiologicalReaction>
</comment>
<comment type="cofactor">
    <cofactor evidence="1">
        <name>FAD</name>
        <dbReference type="ChEBI" id="CHEBI:57692"/>
    </cofactor>
</comment>
<comment type="pathway">
    <text evidence="5 6">Carotenoid biosynthesis; beta-carotene biosynthesis.</text>
</comment>
<comment type="similarity">
    <text evidence="4">Belongs to the lycopene cyclase family.</text>
</comment>
<evidence type="ECO:0000250" key="1">
    <source>
        <dbReference type="UniProtKB" id="P21687"/>
    </source>
</evidence>
<evidence type="ECO:0000269" key="2">
    <source>
    </source>
</evidence>
<evidence type="ECO:0000303" key="3">
    <source>
    </source>
</evidence>
<evidence type="ECO:0000305" key="4"/>
<evidence type="ECO:0000305" key="5">
    <source>
    </source>
</evidence>
<evidence type="ECO:0000305" key="6">
    <source>
    </source>
</evidence>
<dbReference type="EC" id="5.5.1.19" evidence="2 5"/>
<dbReference type="EMBL" id="M87280">
    <property type="protein sequence ID" value="AAA64980.1"/>
    <property type="molecule type" value="Genomic_DNA"/>
</dbReference>
<dbReference type="PIR" id="S52981">
    <property type="entry name" value="S52981"/>
</dbReference>
<dbReference type="UniPathway" id="UPA00802"/>
<dbReference type="GO" id="GO:0045436">
    <property type="term" value="F:lycopene beta cyclase activity"/>
    <property type="evidence" value="ECO:0007669"/>
    <property type="project" value="InterPro"/>
</dbReference>
<dbReference type="GO" id="GO:0016705">
    <property type="term" value="F:oxidoreductase activity, acting on paired donors, with incorporation or reduction of molecular oxygen"/>
    <property type="evidence" value="ECO:0007669"/>
    <property type="project" value="InterPro"/>
</dbReference>
<dbReference type="GO" id="GO:0016117">
    <property type="term" value="P:carotenoid biosynthetic process"/>
    <property type="evidence" value="ECO:0007669"/>
    <property type="project" value="UniProtKB-KW"/>
</dbReference>
<dbReference type="InterPro" id="IPR008461">
    <property type="entry name" value="CrtY"/>
</dbReference>
<dbReference type="InterPro" id="IPR036188">
    <property type="entry name" value="FAD/NAD-bd_sf"/>
</dbReference>
<dbReference type="InterPro" id="IPR010108">
    <property type="entry name" value="Lycopene_cyclase_b/e"/>
</dbReference>
<dbReference type="NCBIfam" id="TIGR01790">
    <property type="entry name" value="carotene-cycl"/>
    <property type="match status" value="1"/>
</dbReference>
<dbReference type="NCBIfam" id="TIGR01789">
    <property type="entry name" value="lycopene_cycl"/>
    <property type="match status" value="1"/>
</dbReference>
<dbReference type="Pfam" id="PF05834">
    <property type="entry name" value="Lycopene_cycl"/>
    <property type="match status" value="1"/>
</dbReference>
<dbReference type="SUPFAM" id="SSF51905">
    <property type="entry name" value="FAD/NAD(P)-binding domain"/>
    <property type="match status" value="1"/>
</dbReference>
<accession>Q01331</accession>
<protein>
    <recommendedName>
        <fullName evidence="3">Lycopene beta-cyclase</fullName>
        <ecNumber evidence="2 5">5.5.1.19</ecNumber>
    </recommendedName>
    <alternativeName>
        <fullName evidence="3">Lycopene cyclase</fullName>
    </alternativeName>
</protein>